<proteinExistence type="inferred from homology"/>
<feature type="chain" id="PRO_0000293762" description="Small ribosomal subunit protein uS3">
    <location>
        <begin position="1"/>
        <end position="266"/>
    </location>
</feature>
<feature type="domain" description="KH type-2" evidence="1">
    <location>
        <begin position="39"/>
        <end position="107"/>
    </location>
</feature>
<feature type="region of interest" description="Disordered" evidence="2">
    <location>
        <begin position="218"/>
        <end position="266"/>
    </location>
</feature>
<feature type="compositionally biased region" description="Basic and acidic residues" evidence="2">
    <location>
        <begin position="230"/>
        <end position="241"/>
    </location>
</feature>
<feature type="compositionally biased region" description="Basic and acidic residues" evidence="2">
    <location>
        <begin position="257"/>
        <end position="266"/>
    </location>
</feature>
<reference key="1">
    <citation type="submission" date="2006-05" db="EMBL/GenBank/DDBJ databases">
        <title>Complete sequence of chromosome 1 of Burkholderia cenocepacia AU 1054.</title>
        <authorList>
            <consortium name="US DOE Joint Genome Institute"/>
            <person name="Copeland A."/>
            <person name="Lucas S."/>
            <person name="Lapidus A."/>
            <person name="Barry K."/>
            <person name="Detter J.C."/>
            <person name="Glavina del Rio T."/>
            <person name="Hammon N."/>
            <person name="Israni S."/>
            <person name="Dalin E."/>
            <person name="Tice H."/>
            <person name="Pitluck S."/>
            <person name="Chain P."/>
            <person name="Malfatti S."/>
            <person name="Shin M."/>
            <person name="Vergez L."/>
            <person name="Schmutz J."/>
            <person name="Larimer F."/>
            <person name="Land M."/>
            <person name="Hauser L."/>
            <person name="Kyrpides N."/>
            <person name="Lykidis A."/>
            <person name="LiPuma J.J."/>
            <person name="Konstantinidis K."/>
            <person name="Tiedje J.M."/>
            <person name="Richardson P."/>
        </authorList>
    </citation>
    <scope>NUCLEOTIDE SEQUENCE [LARGE SCALE GENOMIC DNA]</scope>
    <source>
        <strain>AU 1054</strain>
    </source>
</reference>
<sequence>MGQKIHPTGFRLAVSRNWASRWYANNNNFAAMLQEDIGVREYLKKKLKNASVGRVVIERPAKNARITIYSSRPGVVIGKKGEDIEQLKTELQRRMGVPVHVNIEEIRKPETDAQLIADSITQQLERRIMFRRAMKRAMQNAMRLGAQGIKIMSAGRLNGIEIARTEWYREGRVPLHTLRADIDYATSEAKTTYGIIGVKVWVYKGDTLGRNDAPVVEEVAEDKRPRRNARPGDRRPRRDGEGGAPGARRGAPRRGAGKPEDGKTGE</sequence>
<protein>
    <recommendedName>
        <fullName evidence="1">Small ribosomal subunit protein uS3</fullName>
    </recommendedName>
    <alternativeName>
        <fullName evidence="3">30S ribosomal protein S3</fullName>
    </alternativeName>
</protein>
<gene>
    <name evidence="1" type="primary">rpsC</name>
    <name type="ordered locus">Bcen_2753</name>
</gene>
<dbReference type="EMBL" id="CP000378">
    <property type="protein sequence ID" value="ABF77651.1"/>
    <property type="molecule type" value="Genomic_DNA"/>
</dbReference>
<dbReference type="SMR" id="Q1BRV4"/>
<dbReference type="HOGENOM" id="CLU_058591_0_2_4"/>
<dbReference type="GO" id="GO:0022627">
    <property type="term" value="C:cytosolic small ribosomal subunit"/>
    <property type="evidence" value="ECO:0007669"/>
    <property type="project" value="TreeGrafter"/>
</dbReference>
<dbReference type="GO" id="GO:0003729">
    <property type="term" value="F:mRNA binding"/>
    <property type="evidence" value="ECO:0007669"/>
    <property type="project" value="UniProtKB-UniRule"/>
</dbReference>
<dbReference type="GO" id="GO:0019843">
    <property type="term" value="F:rRNA binding"/>
    <property type="evidence" value="ECO:0007669"/>
    <property type="project" value="UniProtKB-UniRule"/>
</dbReference>
<dbReference type="GO" id="GO:0003735">
    <property type="term" value="F:structural constituent of ribosome"/>
    <property type="evidence" value="ECO:0007669"/>
    <property type="project" value="InterPro"/>
</dbReference>
<dbReference type="GO" id="GO:0006412">
    <property type="term" value="P:translation"/>
    <property type="evidence" value="ECO:0007669"/>
    <property type="project" value="UniProtKB-UniRule"/>
</dbReference>
<dbReference type="CDD" id="cd02412">
    <property type="entry name" value="KH-II_30S_S3"/>
    <property type="match status" value="1"/>
</dbReference>
<dbReference type="FunFam" id="3.30.1140.32:FF:000006">
    <property type="entry name" value="30S ribosomal protein S3"/>
    <property type="match status" value="1"/>
</dbReference>
<dbReference type="FunFam" id="3.30.300.20:FF:000001">
    <property type="entry name" value="30S ribosomal protein S3"/>
    <property type="match status" value="1"/>
</dbReference>
<dbReference type="Gene3D" id="3.30.300.20">
    <property type="match status" value="1"/>
</dbReference>
<dbReference type="Gene3D" id="3.30.1140.32">
    <property type="entry name" value="Ribosomal protein S3, C-terminal domain"/>
    <property type="match status" value="1"/>
</dbReference>
<dbReference type="HAMAP" id="MF_01309_B">
    <property type="entry name" value="Ribosomal_uS3_B"/>
    <property type="match status" value="1"/>
</dbReference>
<dbReference type="InterPro" id="IPR004087">
    <property type="entry name" value="KH_dom"/>
</dbReference>
<dbReference type="InterPro" id="IPR015946">
    <property type="entry name" value="KH_dom-like_a/b"/>
</dbReference>
<dbReference type="InterPro" id="IPR004044">
    <property type="entry name" value="KH_dom_type_2"/>
</dbReference>
<dbReference type="InterPro" id="IPR009019">
    <property type="entry name" value="KH_sf_prok-type"/>
</dbReference>
<dbReference type="InterPro" id="IPR036419">
    <property type="entry name" value="Ribosomal_S3_C_sf"/>
</dbReference>
<dbReference type="InterPro" id="IPR005704">
    <property type="entry name" value="Ribosomal_uS3_bac-typ"/>
</dbReference>
<dbReference type="InterPro" id="IPR001351">
    <property type="entry name" value="Ribosomal_uS3_C"/>
</dbReference>
<dbReference type="InterPro" id="IPR018280">
    <property type="entry name" value="Ribosomal_uS3_CS"/>
</dbReference>
<dbReference type="NCBIfam" id="TIGR01009">
    <property type="entry name" value="rpsC_bact"/>
    <property type="match status" value="1"/>
</dbReference>
<dbReference type="PANTHER" id="PTHR11760">
    <property type="entry name" value="30S/40S RIBOSOMAL PROTEIN S3"/>
    <property type="match status" value="1"/>
</dbReference>
<dbReference type="PANTHER" id="PTHR11760:SF19">
    <property type="entry name" value="SMALL RIBOSOMAL SUBUNIT PROTEIN US3C"/>
    <property type="match status" value="1"/>
</dbReference>
<dbReference type="Pfam" id="PF07650">
    <property type="entry name" value="KH_2"/>
    <property type="match status" value="1"/>
</dbReference>
<dbReference type="Pfam" id="PF00189">
    <property type="entry name" value="Ribosomal_S3_C"/>
    <property type="match status" value="1"/>
</dbReference>
<dbReference type="SMART" id="SM00322">
    <property type="entry name" value="KH"/>
    <property type="match status" value="1"/>
</dbReference>
<dbReference type="SUPFAM" id="SSF54814">
    <property type="entry name" value="Prokaryotic type KH domain (KH-domain type II)"/>
    <property type="match status" value="1"/>
</dbReference>
<dbReference type="SUPFAM" id="SSF54821">
    <property type="entry name" value="Ribosomal protein S3 C-terminal domain"/>
    <property type="match status" value="1"/>
</dbReference>
<dbReference type="PROSITE" id="PS50823">
    <property type="entry name" value="KH_TYPE_2"/>
    <property type="match status" value="1"/>
</dbReference>
<dbReference type="PROSITE" id="PS00548">
    <property type="entry name" value="RIBOSOMAL_S3"/>
    <property type="match status" value="1"/>
</dbReference>
<accession>Q1BRV4</accession>
<organism>
    <name type="scientific">Burkholderia orbicola (strain AU 1054)</name>
    <dbReference type="NCBI Taxonomy" id="331271"/>
    <lineage>
        <taxon>Bacteria</taxon>
        <taxon>Pseudomonadati</taxon>
        <taxon>Pseudomonadota</taxon>
        <taxon>Betaproteobacteria</taxon>
        <taxon>Burkholderiales</taxon>
        <taxon>Burkholderiaceae</taxon>
        <taxon>Burkholderia</taxon>
        <taxon>Burkholderia cepacia complex</taxon>
        <taxon>Burkholderia orbicola</taxon>
    </lineage>
</organism>
<comment type="function">
    <text evidence="1">Binds the lower part of the 30S subunit head. Binds mRNA in the 70S ribosome, positioning it for translation.</text>
</comment>
<comment type="subunit">
    <text evidence="1">Part of the 30S ribosomal subunit. Forms a tight complex with proteins S10 and S14.</text>
</comment>
<comment type="similarity">
    <text evidence="1">Belongs to the universal ribosomal protein uS3 family.</text>
</comment>
<keyword id="KW-0687">Ribonucleoprotein</keyword>
<keyword id="KW-0689">Ribosomal protein</keyword>
<keyword id="KW-0694">RNA-binding</keyword>
<keyword id="KW-0699">rRNA-binding</keyword>
<evidence type="ECO:0000255" key="1">
    <source>
        <dbReference type="HAMAP-Rule" id="MF_01309"/>
    </source>
</evidence>
<evidence type="ECO:0000256" key="2">
    <source>
        <dbReference type="SAM" id="MobiDB-lite"/>
    </source>
</evidence>
<evidence type="ECO:0000305" key="3"/>
<name>RS3_BURO1</name>